<comment type="function">
    <text evidence="1">3'-to-5' exoribonuclease specific for small oligoribonucleotides.</text>
</comment>
<comment type="subcellular location">
    <subcellularLocation>
        <location evidence="3">Cytoplasm</location>
    </subcellularLocation>
</comment>
<comment type="similarity">
    <text evidence="3">Belongs to the oligoribonuclease family.</text>
</comment>
<dbReference type="EC" id="3.1.15.-"/>
<dbReference type="EMBL" id="L42023">
    <property type="protein sequence ID" value="AAC23360.1"/>
    <property type="molecule type" value="Genomic_DNA"/>
</dbReference>
<dbReference type="PIR" id="C64176">
    <property type="entry name" value="C64176"/>
</dbReference>
<dbReference type="RefSeq" id="NP_439857.1">
    <property type="nucleotide sequence ID" value="NC_000907.1"/>
</dbReference>
<dbReference type="PDB" id="1J9A">
    <property type="method" value="X-ray"/>
    <property type="resolution" value="2.50 A"/>
    <property type="chains" value="A=1-182"/>
</dbReference>
<dbReference type="PDBsum" id="1J9A"/>
<dbReference type="SMR" id="P45340"/>
<dbReference type="STRING" id="71421.HI_1715"/>
<dbReference type="EnsemblBacteria" id="AAC23360">
    <property type="protein sequence ID" value="AAC23360"/>
    <property type="gene ID" value="HI_1715"/>
</dbReference>
<dbReference type="KEGG" id="hin:HI_1715"/>
<dbReference type="PATRIC" id="fig|71421.8.peg.1794"/>
<dbReference type="eggNOG" id="COG1949">
    <property type="taxonomic scope" value="Bacteria"/>
</dbReference>
<dbReference type="HOGENOM" id="CLU_064761_2_0_6"/>
<dbReference type="OrthoDB" id="9801329at2"/>
<dbReference type="PhylomeDB" id="P45340"/>
<dbReference type="BioCyc" id="HINF71421:G1GJ1-1730-MONOMER"/>
<dbReference type="EvolutionaryTrace" id="P45340"/>
<dbReference type="Proteomes" id="UP000000579">
    <property type="component" value="Chromosome"/>
</dbReference>
<dbReference type="GO" id="GO:0005737">
    <property type="term" value="C:cytoplasm"/>
    <property type="evidence" value="ECO:0007669"/>
    <property type="project" value="UniProtKB-SubCell"/>
</dbReference>
<dbReference type="GO" id="GO:0000175">
    <property type="term" value="F:3'-5'-RNA exonuclease activity"/>
    <property type="evidence" value="ECO:0007669"/>
    <property type="project" value="InterPro"/>
</dbReference>
<dbReference type="GO" id="GO:0003676">
    <property type="term" value="F:nucleic acid binding"/>
    <property type="evidence" value="ECO:0007669"/>
    <property type="project" value="InterPro"/>
</dbReference>
<dbReference type="GO" id="GO:0006259">
    <property type="term" value="P:DNA metabolic process"/>
    <property type="evidence" value="ECO:0007669"/>
    <property type="project" value="UniProtKB-ARBA"/>
</dbReference>
<dbReference type="CDD" id="cd06135">
    <property type="entry name" value="Orn"/>
    <property type="match status" value="1"/>
</dbReference>
<dbReference type="FunFam" id="3.30.420.10:FF:000003">
    <property type="entry name" value="Oligoribonuclease"/>
    <property type="match status" value="1"/>
</dbReference>
<dbReference type="Gene3D" id="3.30.420.10">
    <property type="entry name" value="Ribonuclease H-like superfamily/Ribonuclease H"/>
    <property type="match status" value="1"/>
</dbReference>
<dbReference type="HAMAP" id="MF_00045">
    <property type="entry name" value="Oligoribonuclease"/>
    <property type="match status" value="1"/>
</dbReference>
<dbReference type="InterPro" id="IPR013520">
    <property type="entry name" value="Exonuclease_RNaseT/DNA_pol3"/>
</dbReference>
<dbReference type="InterPro" id="IPR022894">
    <property type="entry name" value="Oligoribonuclease"/>
</dbReference>
<dbReference type="InterPro" id="IPR012337">
    <property type="entry name" value="RNaseH-like_sf"/>
</dbReference>
<dbReference type="InterPro" id="IPR036397">
    <property type="entry name" value="RNaseH_sf"/>
</dbReference>
<dbReference type="NCBIfam" id="NF003765">
    <property type="entry name" value="PRK05359.1"/>
    <property type="match status" value="1"/>
</dbReference>
<dbReference type="PANTHER" id="PTHR11046">
    <property type="entry name" value="OLIGORIBONUCLEASE, MITOCHONDRIAL"/>
    <property type="match status" value="1"/>
</dbReference>
<dbReference type="PANTHER" id="PTHR11046:SF0">
    <property type="entry name" value="OLIGORIBONUCLEASE, MITOCHONDRIAL"/>
    <property type="match status" value="1"/>
</dbReference>
<dbReference type="Pfam" id="PF00929">
    <property type="entry name" value="RNase_T"/>
    <property type="match status" value="1"/>
</dbReference>
<dbReference type="SMART" id="SM00479">
    <property type="entry name" value="EXOIII"/>
    <property type="match status" value="1"/>
</dbReference>
<dbReference type="SUPFAM" id="SSF53098">
    <property type="entry name" value="Ribonuclease H-like"/>
    <property type="match status" value="1"/>
</dbReference>
<sequence>MSFDKQNLIWIDLEMTGLDPEKERIIEIATIVTDKNLNILAEGPVLAVHQSDELLNKMNDWCQKTHSENGLIERIKASKLTERAAELQTLDFLKKWVPKGASPICGNSIAQDKRFLVKYMPDLADYFHYRHLDVSTLKELAARWKPEILEGFKKENTHLALDDIRESIKELAYYREHFMKLD</sequence>
<keyword id="KW-0002">3D-structure</keyword>
<keyword id="KW-0963">Cytoplasm</keyword>
<keyword id="KW-0269">Exonuclease</keyword>
<keyword id="KW-0378">Hydrolase</keyword>
<keyword id="KW-0540">Nuclease</keyword>
<keyword id="KW-1185">Reference proteome</keyword>
<proteinExistence type="evidence at protein level"/>
<reference key="1">
    <citation type="journal article" date="1995" name="Science">
        <title>Whole-genome random sequencing and assembly of Haemophilus influenzae Rd.</title>
        <authorList>
            <person name="Fleischmann R.D."/>
            <person name="Adams M.D."/>
            <person name="White O."/>
            <person name="Clayton R.A."/>
            <person name="Kirkness E.F."/>
            <person name="Kerlavage A.R."/>
            <person name="Bult C.J."/>
            <person name="Tomb J.-F."/>
            <person name="Dougherty B.A."/>
            <person name="Merrick J.M."/>
            <person name="McKenney K."/>
            <person name="Sutton G.G."/>
            <person name="FitzHugh W."/>
            <person name="Fields C.A."/>
            <person name="Gocayne J.D."/>
            <person name="Scott J.D."/>
            <person name="Shirley R."/>
            <person name="Liu L.-I."/>
            <person name="Glodek A."/>
            <person name="Kelley J.M."/>
            <person name="Weidman J.F."/>
            <person name="Phillips C.A."/>
            <person name="Spriggs T."/>
            <person name="Hedblom E."/>
            <person name="Cotton M.D."/>
            <person name="Utterback T.R."/>
            <person name="Hanna M.C."/>
            <person name="Nguyen D.T."/>
            <person name="Saudek D.M."/>
            <person name="Brandon R.C."/>
            <person name="Fine L.D."/>
            <person name="Fritchman J.L."/>
            <person name="Fuhrmann J.L."/>
            <person name="Geoghagen N.S.M."/>
            <person name="Gnehm C.L."/>
            <person name="McDonald L.A."/>
            <person name="Small K.V."/>
            <person name="Fraser C.M."/>
            <person name="Smith H.O."/>
            <person name="Venter J.C."/>
        </authorList>
    </citation>
    <scope>NUCLEOTIDE SEQUENCE [LARGE SCALE GENOMIC DNA]</scope>
    <source>
        <strain>ATCC 51907 / DSM 11121 / KW20 / Rd</strain>
    </source>
</reference>
<feature type="chain" id="PRO_0000111039" description="Oligoribonuclease">
    <location>
        <begin position="1"/>
        <end position="182"/>
    </location>
</feature>
<feature type="domain" description="Exonuclease">
    <location>
        <begin position="8"/>
        <end position="171"/>
    </location>
</feature>
<feature type="active site" evidence="2">
    <location>
        <position position="129"/>
    </location>
</feature>
<feature type="strand" evidence="4">
    <location>
        <begin position="8"/>
        <end position="18"/>
    </location>
</feature>
<feature type="turn" evidence="4">
    <location>
        <begin position="20"/>
        <end position="22"/>
    </location>
</feature>
<feature type="strand" evidence="4">
    <location>
        <begin position="25"/>
        <end position="33"/>
    </location>
</feature>
<feature type="strand" evidence="4">
    <location>
        <begin position="39"/>
        <end position="42"/>
    </location>
</feature>
<feature type="helix" evidence="4">
    <location>
        <begin position="52"/>
        <end position="56"/>
    </location>
</feature>
<feature type="helix" evidence="4">
    <location>
        <begin position="60"/>
        <end position="69"/>
    </location>
</feature>
<feature type="helix" evidence="4">
    <location>
        <begin position="71"/>
        <end position="75"/>
    </location>
</feature>
<feature type="helix" evidence="4">
    <location>
        <begin position="82"/>
        <end position="93"/>
    </location>
</feature>
<feature type="turn" evidence="4">
    <location>
        <begin position="94"/>
        <end position="96"/>
    </location>
</feature>
<feature type="turn" evidence="4">
    <location>
        <begin position="99"/>
        <end position="101"/>
    </location>
</feature>
<feature type="strand" evidence="4">
    <location>
        <begin position="104"/>
        <end position="108"/>
    </location>
</feature>
<feature type="helix" evidence="4">
    <location>
        <begin position="109"/>
        <end position="119"/>
    </location>
</feature>
<feature type="helix" evidence="4">
    <location>
        <begin position="121"/>
        <end position="125"/>
    </location>
</feature>
<feature type="strand" evidence="4">
    <location>
        <begin position="131"/>
        <end position="133"/>
    </location>
</feature>
<feature type="helix" evidence="4">
    <location>
        <begin position="134"/>
        <end position="144"/>
    </location>
</feature>
<feature type="helix" evidence="4">
    <location>
        <begin position="146"/>
        <end position="151"/>
    </location>
</feature>
<feature type="helix" evidence="4">
    <location>
        <begin position="160"/>
        <end position="177"/>
    </location>
</feature>
<accession>P45340</accession>
<protein>
    <recommendedName>
        <fullName>Oligoribonuclease</fullName>
        <ecNumber>3.1.15.-</ecNumber>
    </recommendedName>
</protein>
<organism>
    <name type="scientific">Haemophilus influenzae (strain ATCC 51907 / DSM 11121 / KW20 / Rd)</name>
    <dbReference type="NCBI Taxonomy" id="71421"/>
    <lineage>
        <taxon>Bacteria</taxon>
        <taxon>Pseudomonadati</taxon>
        <taxon>Pseudomonadota</taxon>
        <taxon>Gammaproteobacteria</taxon>
        <taxon>Pasteurellales</taxon>
        <taxon>Pasteurellaceae</taxon>
        <taxon>Haemophilus</taxon>
    </lineage>
</organism>
<gene>
    <name type="primary">orn</name>
    <name type="ordered locus">HI_1715</name>
</gene>
<name>ORN_HAEIN</name>
<evidence type="ECO:0000250" key="1"/>
<evidence type="ECO:0000255" key="2"/>
<evidence type="ECO:0000305" key="3"/>
<evidence type="ECO:0007829" key="4">
    <source>
        <dbReference type="PDB" id="1J9A"/>
    </source>
</evidence>